<dbReference type="EMBL" id="AB009056">
    <property type="protein sequence ID" value="BAB08727.1"/>
    <property type="molecule type" value="Genomic_DNA"/>
</dbReference>
<dbReference type="EMBL" id="CP002688">
    <property type="protein sequence ID" value="AED93248.1"/>
    <property type="molecule type" value="Genomic_DNA"/>
</dbReference>
<dbReference type="RefSeq" id="NP_197792.1">
    <molecule id="Q9FLV8-1"/>
    <property type="nucleotide sequence ID" value="NM_122309.2"/>
</dbReference>
<dbReference type="PaxDb" id="3702-AT5G24040.1"/>
<dbReference type="EnsemblPlants" id="AT5G24040.1">
    <molecule id="Q9FLV8-1"/>
    <property type="protein sequence ID" value="AT5G24040.1"/>
    <property type="gene ID" value="AT5G24040"/>
</dbReference>
<dbReference type="GeneID" id="832469"/>
<dbReference type="Gramene" id="AT5G24040.1">
    <molecule id="Q9FLV8-1"/>
    <property type="protein sequence ID" value="AT5G24040.1"/>
    <property type="gene ID" value="AT5G24040"/>
</dbReference>
<dbReference type="KEGG" id="ath:AT5G24040"/>
<dbReference type="Araport" id="AT5G24040"/>
<dbReference type="TAIR" id="AT5G24040">
    <property type="gene designation" value="ATFDA19"/>
</dbReference>
<dbReference type="eggNOG" id="ENOG502QW71">
    <property type="taxonomic scope" value="Eukaryota"/>
</dbReference>
<dbReference type="HOGENOM" id="CLU_019286_1_0_1"/>
<dbReference type="InParanoid" id="Q9FLV8"/>
<dbReference type="OMA" id="FLPKLYP"/>
<dbReference type="PhylomeDB" id="Q9FLV8"/>
<dbReference type="PRO" id="PR:Q9FLV8"/>
<dbReference type="Proteomes" id="UP000006548">
    <property type="component" value="Chromosome 5"/>
</dbReference>
<dbReference type="ExpressionAtlas" id="Q9FLV8">
    <property type="expression patterns" value="baseline and differential"/>
</dbReference>
<dbReference type="CDD" id="cd09917">
    <property type="entry name" value="F-box_SF"/>
    <property type="match status" value="1"/>
</dbReference>
<dbReference type="InterPro" id="IPR036047">
    <property type="entry name" value="F-box-like_dom_sf"/>
</dbReference>
<dbReference type="InterPro" id="IPR005174">
    <property type="entry name" value="KIB1-4_b-propeller"/>
</dbReference>
<dbReference type="InterPro" id="IPR051304">
    <property type="entry name" value="SCF_F-box_domain"/>
</dbReference>
<dbReference type="PANTHER" id="PTHR47123:SF7">
    <property type="entry name" value="DUF295 DOMAIN-CONTAINING PROTEIN"/>
    <property type="match status" value="1"/>
</dbReference>
<dbReference type="PANTHER" id="PTHR47123">
    <property type="entry name" value="F-BOX PROTEIN SKIP23"/>
    <property type="match status" value="1"/>
</dbReference>
<dbReference type="Pfam" id="PF03478">
    <property type="entry name" value="Beta-prop_KIB1-4"/>
    <property type="match status" value="1"/>
</dbReference>
<dbReference type="SUPFAM" id="SSF81383">
    <property type="entry name" value="F-box domain"/>
    <property type="match status" value="1"/>
</dbReference>
<sequence length="373" mass="43795">MVKWSELPPEILHLISLKIDNPFDLIHFRSVCSFWRSSSLLKFRHMTSLRCPLPLDPGGCGDDCHILSSRVYLLKCPNRDRPQYWMFKLQAKENGEVVLHSLFLRRNSSAYGCLYPSLSIDLLNCQIFELAQEHVACYSEWFELFECISKCEERIGFMGLNREKNEYMILGKLSFNGLAMYRSVDNRWTELEITPDSFFEGIVPFKGKFYAIDRTGKTTVVDPTLEVNTFQRSRPCDKTRKRWLLMTGDKLILVEMCTKSRYDFHIPNIREKKIWFEISELNEERNDWDQVEDMDGRVLFLEHYCTFSCLATEIPGFRANSIIFMDLWGGSNSYELESILVYEFNEKGVRSLRDKLEYIELFPFPPGWVISNG</sequence>
<keyword id="KW-0025">Alternative splicing</keyword>
<keyword id="KW-0880">Kelch repeat</keyword>
<keyword id="KW-1185">Reference proteome</keyword>
<keyword id="KW-0677">Repeat</keyword>
<feature type="chain" id="PRO_0000283268" description="Putative F-box/kelch-repeat protein At5g24040">
    <location>
        <begin position="1"/>
        <end position="373"/>
    </location>
</feature>
<feature type="domain" description="F-box">
    <location>
        <begin position="2"/>
        <end position="50"/>
    </location>
</feature>
<feature type="repeat" description="Kelch 1">
    <location>
        <begin position="165"/>
        <end position="207"/>
    </location>
</feature>
<feature type="repeat" description="Kelch 2">
    <location>
        <begin position="262"/>
        <end position="308"/>
    </location>
</feature>
<gene>
    <name type="ordered locus">At5g24040</name>
    <name type="ORF">MZF18.8</name>
</gene>
<reference key="1">
    <citation type="journal article" date="1998" name="DNA Res.">
        <title>Structural analysis of Arabidopsis thaliana chromosome 5. IV. Sequence features of the regions of 1,456,315 bp covered by nineteen physically assigned P1 and TAC clones.</title>
        <authorList>
            <person name="Sato S."/>
            <person name="Kaneko T."/>
            <person name="Kotani H."/>
            <person name="Nakamura Y."/>
            <person name="Asamizu E."/>
            <person name="Miyajima N."/>
            <person name="Tabata S."/>
        </authorList>
    </citation>
    <scope>NUCLEOTIDE SEQUENCE [LARGE SCALE GENOMIC DNA]</scope>
    <source>
        <strain>cv. Columbia</strain>
    </source>
</reference>
<reference key="2">
    <citation type="journal article" date="2017" name="Plant J.">
        <title>Araport11: a complete reannotation of the Arabidopsis thaliana reference genome.</title>
        <authorList>
            <person name="Cheng C.Y."/>
            <person name="Krishnakumar V."/>
            <person name="Chan A.P."/>
            <person name="Thibaud-Nissen F."/>
            <person name="Schobel S."/>
            <person name="Town C.D."/>
        </authorList>
    </citation>
    <scope>GENOME REANNOTATION</scope>
    <source>
        <strain>cv. Columbia</strain>
    </source>
</reference>
<accession>Q9FLV8</accession>
<proteinExistence type="predicted"/>
<comment type="alternative products">
    <event type="alternative splicing"/>
    <isoform>
        <id>Q9FLV8-1</id>
        <name>1</name>
        <sequence type="displayed"/>
    </isoform>
    <text>A number of isoforms are produced. According to EST sequences.</text>
</comment>
<protein>
    <recommendedName>
        <fullName>Putative F-box/kelch-repeat protein At5g24040</fullName>
    </recommendedName>
</protein>
<organism>
    <name type="scientific">Arabidopsis thaliana</name>
    <name type="common">Mouse-ear cress</name>
    <dbReference type="NCBI Taxonomy" id="3702"/>
    <lineage>
        <taxon>Eukaryota</taxon>
        <taxon>Viridiplantae</taxon>
        <taxon>Streptophyta</taxon>
        <taxon>Embryophyta</taxon>
        <taxon>Tracheophyta</taxon>
        <taxon>Spermatophyta</taxon>
        <taxon>Magnoliopsida</taxon>
        <taxon>eudicotyledons</taxon>
        <taxon>Gunneridae</taxon>
        <taxon>Pentapetalae</taxon>
        <taxon>rosids</taxon>
        <taxon>malvids</taxon>
        <taxon>Brassicales</taxon>
        <taxon>Brassicaceae</taxon>
        <taxon>Camelineae</taxon>
        <taxon>Arabidopsis</taxon>
    </lineage>
</organism>
<name>FK112_ARATH</name>